<dbReference type="EMBL" id="U85246">
    <property type="protein sequence ID" value="AAB81662.1"/>
    <property type="molecule type" value="mRNA"/>
</dbReference>
<dbReference type="EMBL" id="CM000130">
    <property type="protein sequence ID" value="EAY98426.1"/>
    <property type="molecule type" value="Genomic_DNA"/>
</dbReference>
<dbReference type="PIR" id="T04175">
    <property type="entry name" value="T04175"/>
</dbReference>
<dbReference type="SMR" id="A2Y5R6"/>
<dbReference type="STRING" id="39946.A2Y5R6"/>
<dbReference type="EnsemblPlants" id="BGIOSGA017864-TA">
    <property type="protein sequence ID" value="BGIOSGA017864-PA"/>
    <property type="gene ID" value="BGIOSGA017864"/>
</dbReference>
<dbReference type="EnsemblPlants" id="OsLima_05g0020620.01">
    <property type="protein sequence ID" value="OsLima_05g0020620.01"/>
    <property type="gene ID" value="OsLima_05g0020620"/>
</dbReference>
<dbReference type="Gramene" id="BGIOSGA017864-TA">
    <property type="protein sequence ID" value="BGIOSGA017864-PA"/>
    <property type="gene ID" value="BGIOSGA017864"/>
</dbReference>
<dbReference type="Gramene" id="OsLima_05g0020620.01">
    <property type="protein sequence ID" value="OsLima_05g0020620.01"/>
    <property type="gene ID" value="OsLima_05g0020620"/>
</dbReference>
<dbReference type="HOGENOM" id="CLU_027462_0_3_1"/>
<dbReference type="OMA" id="APANCDI"/>
<dbReference type="Proteomes" id="UP000007015">
    <property type="component" value="Chromosome 5"/>
</dbReference>
<dbReference type="GO" id="GO:0005576">
    <property type="term" value="C:extracellular region"/>
    <property type="evidence" value="ECO:0007669"/>
    <property type="project" value="UniProtKB-KW"/>
</dbReference>
<dbReference type="GO" id="GO:0016020">
    <property type="term" value="C:membrane"/>
    <property type="evidence" value="ECO:0007669"/>
    <property type="project" value="UniProtKB-SubCell"/>
</dbReference>
<dbReference type="GO" id="GO:0009828">
    <property type="term" value="P:plant-type cell wall loosening"/>
    <property type="evidence" value="ECO:0000314"/>
    <property type="project" value="UniProtKB"/>
</dbReference>
<dbReference type="GO" id="GO:0071669">
    <property type="term" value="P:plant-type cell wall organization or biogenesis"/>
    <property type="evidence" value="ECO:0000314"/>
    <property type="project" value="UniProtKB"/>
</dbReference>
<dbReference type="CDD" id="cd22274">
    <property type="entry name" value="DPBB_EXPA_N"/>
    <property type="match status" value="1"/>
</dbReference>
<dbReference type="FunFam" id="2.40.40.10:FF:000001">
    <property type="entry name" value="Expansin"/>
    <property type="match status" value="1"/>
</dbReference>
<dbReference type="FunFam" id="2.60.40.760:FF:000001">
    <property type="entry name" value="Expansin"/>
    <property type="match status" value="1"/>
</dbReference>
<dbReference type="Gene3D" id="2.60.40.760">
    <property type="entry name" value="Expansin, cellulose-binding-like domain"/>
    <property type="match status" value="1"/>
</dbReference>
<dbReference type="Gene3D" id="2.40.40.10">
    <property type="entry name" value="RlpA-like domain"/>
    <property type="match status" value="1"/>
</dbReference>
<dbReference type="InterPro" id="IPR007118">
    <property type="entry name" value="Expan_Lol_pI"/>
</dbReference>
<dbReference type="InterPro" id="IPR002963">
    <property type="entry name" value="Expansin"/>
</dbReference>
<dbReference type="InterPro" id="IPR007112">
    <property type="entry name" value="Expansin/allergen_DPBB_dom"/>
</dbReference>
<dbReference type="InterPro" id="IPR007117">
    <property type="entry name" value="Expansin_CBD"/>
</dbReference>
<dbReference type="InterPro" id="IPR036749">
    <property type="entry name" value="Expansin_CBD_sf"/>
</dbReference>
<dbReference type="InterPro" id="IPR009009">
    <property type="entry name" value="RlpA-like_DPBB"/>
</dbReference>
<dbReference type="InterPro" id="IPR036908">
    <property type="entry name" value="RlpA-like_sf"/>
</dbReference>
<dbReference type="PANTHER" id="PTHR31867">
    <property type="entry name" value="EXPANSIN-A15"/>
    <property type="match status" value="1"/>
</dbReference>
<dbReference type="Pfam" id="PF03330">
    <property type="entry name" value="DPBB_1"/>
    <property type="match status" value="1"/>
</dbReference>
<dbReference type="Pfam" id="PF01357">
    <property type="entry name" value="Expansin_C"/>
    <property type="match status" value="1"/>
</dbReference>
<dbReference type="PRINTS" id="PR01226">
    <property type="entry name" value="EXPANSIN"/>
</dbReference>
<dbReference type="PRINTS" id="PR01225">
    <property type="entry name" value="EXPANSNFAMLY"/>
</dbReference>
<dbReference type="SMART" id="SM00837">
    <property type="entry name" value="DPBB_1"/>
    <property type="match status" value="1"/>
</dbReference>
<dbReference type="SUPFAM" id="SSF50685">
    <property type="entry name" value="Barwin-like endoglucanases"/>
    <property type="match status" value="1"/>
</dbReference>
<dbReference type="SUPFAM" id="SSF49590">
    <property type="entry name" value="PHL pollen allergen"/>
    <property type="match status" value="1"/>
</dbReference>
<dbReference type="PROSITE" id="PS50843">
    <property type="entry name" value="EXPANSIN_CBD"/>
    <property type="match status" value="1"/>
</dbReference>
<dbReference type="PROSITE" id="PS50842">
    <property type="entry name" value="EXPANSIN_EG45"/>
    <property type="match status" value="1"/>
</dbReference>
<protein>
    <recommendedName>
        <fullName>Expansin-A4</fullName>
    </recommendedName>
    <alternativeName>
        <fullName>Alpha-expansin-4</fullName>
    </alternativeName>
    <alternativeName>
        <fullName>OsEXP4</fullName>
    </alternativeName>
    <alternativeName>
        <fullName>OsEXPA4</fullName>
    </alternativeName>
    <alternativeName>
        <fullName>OsaEXPa1.22</fullName>
    </alternativeName>
</protein>
<feature type="signal peptide" evidence="2">
    <location>
        <begin position="1"/>
        <end position="18"/>
    </location>
</feature>
<feature type="chain" id="PRO_0000295020" description="Expansin-A4">
    <location>
        <begin position="19"/>
        <end position="246"/>
    </location>
</feature>
<feature type="domain" description="Expansin-like EG45" evidence="4">
    <location>
        <begin position="42"/>
        <end position="154"/>
    </location>
</feature>
<feature type="domain" description="Expansin-like CBD" evidence="3">
    <location>
        <begin position="164"/>
        <end position="243"/>
    </location>
</feature>
<feature type="disulfide bond" evidence="4">
    <location>
        <begin position="45"/>
        <end position="73"/>
    </location>
</feature>
<feature type="disulfide bond" evidence="4">
    <location>
        <begin position="76"/>
        <end position="149"/>
    </location>
</feature>
<feature type="disulfide bond" evidence="4">
    <location>
        <begin position="81"/>
        <end position="88"/>
    </location>
</feature>
<feature type="sequence conflict" description="In Ref. 1; AAB81662." evidence="9" ref="1">
    <original>V</original>
    <variation>I</variation>
    <location>
        <position position="155"/>
    </location>
</feature>
<evidence type="ECO:0000250" key="1"/>
<evidence type="ECO:0000255" key="2"/>
<evidence type="ECO:0000255" key="3">
    <source>
        <dbReference type="PROSITE-ProRule" id="PRU00078"/>
    </source>
</evidence>
<evidence type="ECO:0000255" key="4">
    <source>
        <dbReference type="PROSITE-ProRule" id="PRU00079"/>
    </source>
</evidence>
<evidence type="ECO:0000269" key="5">
    <source>
    </source>
</evidence>
<evidence type="ECO:0000269" key="6">
    <source>
    </source>
</evidence>
<evidence type="ECO:0000269" key="7">
    <source>
    </source>
</evidence>
<evidence type="ECO:0000269" key="8">
    <source>
    </source>
</evidence>
<evidence type="ECO:0000305" key="9"/>
<gene>
    <name type="primary">EXPA4</name>
    <name type="synonym">EXP4</name>
    <name type="ORF">OsI_019659</name>
</gene>
<proteinExistence type="evidence at transcript level"/>
<keyword id="KW-0134">Cell wall</keyword>
<keyword id="KW-1015">Disulfide bond</keyword>
<keyword id="KW-0472">Membrane</keyword>
<keyword id="KW-1185">Reference proteome</keyword>
<keyword id="KW-0964">Secreted</keyword>
<keyword id="KW-0732">Signal</keyword>
<reference key="1">
    <citation type="journal article" date="1997" name="Plant Cell">
        <title>Expression of expansin genes is correlated with growth in deepwater rice.</title>
        <authorList>
            <person name="Cho H.-T."/>
            <person name="Kende H."/>
        </authorList>
    </citation>
    <scope>NUCLEOTIDE SEQUENCE [MRNA]</scope>
    <scope>TISSUE SPECIFICITY</scope>
    <scope>DEVELOPMENTAL STAGE</scope>
    <scope>INDUCTION</scope>
    <source>
        <strain>cv. Pin Gaew 56</strain>
        <tissue>Internode</tissue>
    </source>
</reference>
<reference key="2">
    <citation type="journal article" date="2005" name="PLoS Biol.">
        <title>The genomes of Oryza sativa: a history of duplications.</title>
        <authorList>
            <person name="Yu J."/>
            <person name="Wang J."/>
            <person name="Lin W."/>
            <person name="Li S."/>
            <person name="Li H."/>
            <person name="Zhou J."/>
            <person name="Ni P."/>
            <person name="Dong W."/>
            <person name="Hu S."/>
            <person name="Zeng C."/>
            <person name="Zhang J."/>
            <person name="Zhang Y."/>
            <person name="Li R."/>
            <person name="Xu Z."/>
            <person name="Li S."/>
            <person name="Li X."/>
            <person name="Zheng H."/>
            <person name="Cong L."/>
            <person name="Lin L."/>
            <person name="Yin J."/>
            <person name="Geng J."/>
            <person name="Li G."/>
            <person name="Shi J."/>
            <person name="Liu J."/>
            <person name="Lv H."/>
            <person name="Li J."/>
            <person name="Wang J."/>
            <person name="Deng Y."/>
            <person name="Ran L."/>
            <person name="Shi X."/>
            <person name="Wang X."/>
            <person name="Wu Q."/>
            <person name="Li C."/>
            <person name="Ren X."/>
            <person name="Wang J."/>
            <person name="Wang X."/>
            <person name="Li D."/>
            <person name="Liu D."/>
            <person name="Zhang X."/>
            <person name="Ji Z."/>
            <person name="Zhao W."/>
            <person name="Sun Y."/>
            <person name="Zhang Z."/>
            <person name="Bao J."/>
            <person name="Han Y."/>
            <person name="Dong L."/>
            <person name="Ji J."/>
            <person name="Chen P."/>
            <person name="Wu S."/>
            <person name="Liu J."/>
            <person name="Xiao Y."/>
            <person name="Bu D."/>
            <person name="Tan J."/>
            <person name="Yang L."/>
            <person name="Ye C."/>
            <person name="Zhang J."/>
            <person name="Xu J."/>
            <person name="Zhou Y."/>
            <person name="Yu Y."/>
            <person name="Zhang B."/>
            <person name="Zhuang S."/>
            <person name="Wei H."/>
            <person name="Liu B."/>
            <person name="Lei M."/>
            <person name="Yu H."/>
            <person name="Li Y."/>
            <person name="Xu H."/>
            <person name="Wei S."/>
            <person name="He X."/>
            <person name="Fang L."/>
            <person name="Zhang Z."/>
            <person name="Zhang Y."/>
            <person name="Huang X."/>
            <person name="Su Z."/>
            <person name="Tong W."/>
            <person name="Li J."/>
            <person name="Tong Z."/>
            <person name="Li S."/>
            <person name="Ye J."/>
            <person name="Wang L."/>
            <person name="Fang L."/>
            <person name="Lei T."/>
            <person name="Chen C.-S."/>
            <person name="Chen H.-C."/>
            <person name="Xu Z."/>
            <person name="Li H."/>
            <person name="Huang H."/>
            <person name="Zhang F."/>
            <person name="Xu H."/>
            <person name="Li N."/>
            <person name="Zhao C."/>
            <person name="Li S."/>
            <person name="Dong L."/>
            <person name="Huang Y."/>
            <person name="Li L."/>
            <person name="Xi Y."/>
            <person name="Qi Q."/>
            <person name="Li W."/>
            <person name="Zhang B."/>
            <person name="Hu W."/>
            <person name="Zhang Y."/>
            <person name="Tian X."/>
            <person name="Jiao Y."/>
            <person name="Liang X."/>
            <person name="Jin J."/>
            <person name="Gao L."/>
            <person name="Zheng W."/>
            <person name="Hao B."/>
            <person name="Liu S.-M."/>
            <person name="Wang W."/>
            <person name="Yuan L."/>
            <person name="Cao M."/>
            <person name="McDermott J."/>
            <person name="Samudrala R."/>
            <person name="Wang J."/>
            <person name="Wong G.K.-S."/>
            <person name="Yang H."/>
        </authorList>
    </citation>
    <scope>NUCLEOTIDE SEQUENCE [LARGE SCALE GENOMIC DNA]</scope>
    <source>
        <strain>cv. 93-11</strain>
    </source>
</reference>
<reference key="3">
    <citation type="journal article" date="1998" name="Plant J.">
        <title>Tissue localization of expansins in deepwater rice.</title>
        <authorList>
            <person name="Cho H.-T."/>
            <person name="Kende H."/>
        </authorList>
    </citation>
    <scope>TISSUE SPECIFICITY</scope>
</reference>
<reference key="4">
    <citation type="journal article" date="2002" name="Plant Physiol.">
        <title>Expression of alpha-expansin and expansin-like genes in deepwater rice.</title>
        <authorList>
            <person name="Lee Y."/>
            <person name="Kende H."/>
        </authorList>
    </citation>
    <scope>INDUCTION</scope>
</reference>
<reference key="5">
    <citation type="journal article" date="2003" name="Plant Cell">
        <title>Regulation of expansin gene expression affects growth and development in transgenic rice plants.</title>
        <authorList>
            <person name="Choi D."/>
            <person name="Lee Y."/>
            <person name="Cho H.-T."/>
            <person name="Kende H."/>
        </authorList>
    </citation>
    <scope>FUNCTION</scope>
    <scope>DISRUPTION PHENOTYPE</scope>
</reference>
<reference key="6">
    <citation type="journal article" date="2004" name="Plant Mol. Biol.">
        <title>Nomenclature for members of the expansin superfamily of genes and proteins.</title>
        <authorList>
            <person name="Kende H."/>
            <person name="Bradford K.J."/>
            <person name="Brummell D.A."/>
            <person name="Cho H.-T."/>
            <person name="Cosgrove D.J."/>
            <person name="Fleming A.J."/>
            <person name="Gehring C."/>
            <person name="Lee Y."/>
            <person name="McQueen-Mason S.J."/>
            <person name="Rose J.K.C."/>
            <person name="Voesenek L.A.C."/>
        </authorList>
    </citation>
    <scope>NOMENCLATURE</scope>
</reference>
<name>EXPA4_ORYSI</name>
<comment type="function">
    <text evidence="6">Causes loosening and extension of plant cell walls by disrupting non-covalent bonding between cellulose microfibrils and matrix glucans. No enzymatic activity has been found. Required for normal plant growth. May be required for rapid internodal elongation in deepwater rice during submergence.</text>
</comment>
<comment type="subcellular location">
    <subcellularLocation>
        <location evidence="1">Secreted</location>
        <location evidence="1">Cell wall</location>
    </subcellularLocation>
    <subcellularLocation>
        <location evidence="1">Membrane</location>
        <topology evidence="1">Peripheral membrane protein</topology>
    </subcellularLocation>
</comment>
<comment type="tissue specificity">
    <text evidence="7 8">Expressed in lateral root primordia, adventitious root primordia, coleoptiles, shoot apex, leaf primordia, very young leaves, panicles and flowers.</text>
</comment>
<comment type="developmental stage">
    <text evidence="7">Expressed in the apical region (growing zone) of the root hair. Expressed in the basal growing zone of air-grown internode.</text>
</comment>
<comment type="induction">
    <text evidence="5 7">By gibberellin (GA3), submergence and wounding.</text>
</comment>
<comment type="disruption phenotype">
    <text evidence="6">Plants are smaller.</text>
</comment>
<comment type="similarity">
    <text evidence="9">Belongs to the expansin family. Expansin A subfamily.</text>
</comment>
<comment type="online information" name="EXPANSIN homepage">
    <link uri="https://www.dept.psu.edu/biology/groups/expansins/index.htm"/>
</comment>
<sequence length="246" mass="25884">MAIAGVLFLLFLARQASAAGYGGWQSAHATFYGGGDASGTMGGACGYGNLYSQGYGTNTAALSTALFNDGAACGSCYELRCDNAGSSCLPGSITVTATNFCPPNYGLPSDDGGWCNPPRPHFDMAEPAFLHIAQYRAGIVPVSFRRVPCVKKGGVRFTVNGHSYFNLVLVTNVAGAGDVRSVSIKGSRTGWQPMSRNWGQNWQSNAFLDGQSLSFQVTASDGRTVTSNNVAHPGWQFGQTFEGGQF</sequence>
<organism>
    <name type="scientific">Oryza sativa subsp. indica</name>
    <name type="common">Rice</name>
    <dbReference type="NCBI Taxonomy" id="39946"/>
    <lineage>
        <taxon>Eukaryota</taxon>
        <taxon>Viridiplantae</taxon>
        <taxon>Streptophyta</taxon>
        <taxon>Embryophyta</taxon>
        <taxon>Tracheophyta</taxon>
        <taxon>Spermatophyta</taxon>
        <taxon>Magnoliopsida</taxon>
        <taxon>Liliopsida</taxon>
        <taxon>Poales</taxon>
        <taxon>Poaceae</taxon>
        <taxon>BOP clade</taxon>
        <taxon>Oryzoideae</taxon>
        <taxon>Oryzeae</taxon>
        <taxon>Oryzinae</taxon>
        <taxon>Oryza</taxon>
        <taxon>Oryza sativa</taxon>
    </lineage>
</organism>
<accession>A2Y5R6</accession>
<accession>P93442</accession>
<accession>Q75GN4</accession>
<accession>Q946J0</accession>